<reference key="1">
    <citation type="journal article" date="2000" name="J. Biol. Chem.">
        <title>Type II cAMP-dependent protein kinase-deficient Drosophila are viable but show developmental, circadian, and drug response phenotypes.</title>
        <authorList>
            <person name="Park S.K."/>
            <person name="Sedore S.A."/>
            <person name="Cronmiller C."/>
            <person name="Hirsh J."/>
        </authorList>
    </citation>
    <scope>NUCLEOTIDE SEQUENCE [MRNA] (ISOFORM A)</scope>
    <scope>FUNCTION</scope>
</reference>
<reference key="2">
    <citation type="journal article" date="2000" name="Science">
        <title>The genome sequence of Drosophila melanogaster.</title>
        <authorList>
            <person name="Adams M.D."/>
            <person name="Celniker S.E."/>
            <person name="Holt R.A."/>
            <person name="Evans C.A."/>
            <person name="Gocayne J.D."/>
            <person name="Amanatides P.G."/>
            <person name="Scherer S.E."/>
            <person name="Li P.W."/>
            <person name="Hoskins R.A."/>
            <person name="Galle R.F."/>
            <person name="George R.A."/>
            <person name="Lewis S.E."/>
            <person name="Richards S."/>
            <person name="Ashburner M."/>
            <person name="Henderson S.N."/>
            <person name="Sutton G.G."/>
            <person name="Wortman J.R."/>
            <person name="Yandell M.D."/>
            <person name="Zhang Q."/>
            <person name="Chen L.X."/>
            <person name="Brandon R.C."/>
            <person name="Rogers Y.-H.C."/>
            <person name="Blazej R.G."/>
            <person name="Champe M."/>
            <person name="Pfeiffer B.D."/>
            <person name="Wan K.H."/>
            <person name="Doyle C."/>
            <person name="Baxter E.G."/>
            <person name="Helt G."/>
            <person name="Nelson C.R."/>
            <person name="Miklos G.L.G."/>
            <person name="Abril J.F."/>
            <person name="Agbayani A."/>
            <person name="An H.-J."/>
            <person name="Andrews-Pfannkoch C."/>
            <person name="Baldwin D."/>
            <person name="Ballew R.M."/>
            <person name="Basu A."/>
            <person name="Baxendale J."/>
            <person name="Bayraktaroglu L."/>
            <person name="Beasley E.M."/>
            <person name="Beeson K.Y."/>
            <person name="Benos P.V."/>
            <person name="Berman B.P."/>
            <person name="Bhandari D."/>
            <person name="Bolshakov S."/>
            <person name="Borkova D."/>
            <person name="Botchan M.R."/>
            <person name="Bouck J."/>
            <person name="Brokstein P."/>
            <person name="Brottier P."/>
            <person name="Burtis K.C."/>
            <person name="Busam D.A."/>
            <person name="Butler H."/>
            <person name="Cadieu E."/>
            <person name="Center A."/>
            <person name="Chandra I."/>
            <person name="Cherry J.M."/>
            <person name="Cawley S."/>
            <person name="Dahlke C."/>
            <person name="Davenport L.B."/>
            <person name="Davies P."/>
            <person name="de Pablos B."/>
            <person name="Delcher A."/>
            <person name="Deng Z."/>
            <person name="Mays A.D."/>
            <person name="Dew I."/>
            <person name="Dietz S.M."/>
            <person name="Dodson K."/>
            <person name="Doup L.E."/>
            <person name="Downes M."/>
            <person name="Dugan-Rocha S."/>
            <person name="Dunkov B.C."/>
            <person name="Dunn P."/>
            <person name="Durbin K.J."/>
            <person name="Evangelista C.C."/>
            <person name="Ferraz C."/>
            <person name="Ferriera S."/>
            <person name="Fleischmann W."/>
            <person name="Fosler C."/>
            <person name="Gabrielian A.E."/>
            <person name="Garg N.S."/>
            <person name="Gelbart W.M."/>
            <person name="Glasser K."/>
            <person name="Glodek A."/>
            <person name="Gong F."/>
            <person name="Gorrell J.H."/>
            <person name="Gu Z."/>
            <person name="Guan P."/>
            <person name="Harris M."/>
            <person name="Harris N.L."/>
            <person name="Harvey D.A."/>
            <person name="Heiman T.J."/>
            <person name="Hernandez J.R."/>
            <person name="Houck J."/>
            <person name="Hostin D."/>
            <person name="Houston K.A."/>
            <person name="Howland T.J."/>
            <person name="Wei M.-H."/>
            <person name="Ibegwam C."/>
            <person name="Jalali M."/>
            <person name="Kalush F."/>
            <person name="Karpen G.H."/>
            <person name="Ke Z."/>
            <person name="Kennison J.A."/>
            <person name="Ketchum K.A."/>
            <person name="Kimmel B.E."/>
            <person name="Kodira C.D."/>
            <person name="Kraft C.L."/>
            <person name="Kravitz S."/>
            <person name="Kulp D."/>
            <person name="Lai Z."/>
            <person name="Lasko P."/>
            <person name="Lei Y."/>
            <person name="Levitsky A.A."/>
            <person name="Li J.H."/>
            <person name="Li Z."/>
            <person name="Liang Y."/>
            <person name="Lin X."/>
            <person name="Liu X."/>
            <person name="Mattei B."/>
            <person name="McIntosh T.C."/>
            <person name="McLeod M.P."/>
            <person name="McPherson D."/>
            <person name="Merkulov G."/>
            <person name="Milshina N.V."/>
            <person name="Mobarry C."/>
            <person name="Morris J."/>
            <person name="Moshrefi A."/>
            <person name="Mount S.M."/>
            <person name="Moy M."/>
            <person name="Murphy B."/>
            <person name="Murphy L."/>
            <person name="Muzny D.M."/>
            <person name="Nelson D.L."/>
            <person name="Nelson D.R."/>
            <person name="Nelson K.A."/>
            <person name="Nixon K."/>
            <person name="Nusskern D.R."/>
            <person name="Pacleb J.M."/>
            <person name="Palazzolo M."/>
            <person name="Pittman G.S."/>
            <person name="Pan S."/>
            <person name="Pollard J."/>
            <person name="Puri V."/>
            <person name="Reese M.G."/>
            <person name="Reinert K."/>
            <person name="Remington K."/>
            <person name="Saunders R.D.C."/>
            <person name="Scheeler F."/>
            <person name="Shen H."/>
            <person name="Shue B.C."/>
            <person name="Siden-Kiamos I."/>
            <person name="Simpson M."/>
            <person name="Skupski M.P."/>
            <person name="Smith T.J."/>
            <person name="Spier E."/>
            <person name="Spradling A.C."/>
            <person name="Stapleton M."/>
            <person name="Strong R."/>
            <person name="Sun E."/>
            <person name="Svirskas R."/>
            <person name="Tector C."/>
            <person name="Turner R."/>
            <person name="Venter E."/>
            <person name="Wang A.H."/>
            <person name="Wang X."/>
            <person name="Wang Z.-Y."/>
            <person name="Wassarman D.A."/>
            <person name="Weinstock G.M."/>
            <person name="Weissenbach J."/>
            <person name="Williams S.M."/>
            <person name="Woodage T."/>
            <person name="Worley K.C."/>
            <person name="Wu D."/>
            <person name="Yang S."/>
            <person name="Yao Q.A."/>
            <person name="Ye J."/>
            <person name="Yeh R.-F."/>
            <person name="Zaveri J.S."/>
            <person name="Zhan M."/>
            <person name="Zhang G."/>
            <person name="Zhao Q."/>
            <person name="Zheng L."/>
            <person name="Zheng X.H."/>
            <person name="Zhong F.N."/>
            <person name="Zhong W."/>
            <person name="Zhou X."/>
            <person name="Zhu S.C."/>
            <person name="Zhu X."/>
            <person name="Smith H.O."/>
            <person name="Gibbs R.A."/>
            <person name="Myers E.W."/>
            <person name="Rubin G.M."/>
            <person name="Venter J.C."/>
        </authorList>
    </citation>
    <scope>NUCLEOTIDE SEQUENCE [LARGE SCALE GENOMIC DNA]</scope>
    <source>
        <strain>Berkeley</strain>
    </source>
</reference>
<reference key="3">
    <citation type="journal article" date="2002" name="Genome Biol.">
        <title>Annotation of the Drosophila melanogaster euchromatic genome: a systematic review.</title>
        <authorList>
            <person name="Misra S."/>
            <person name="Crosby M.A."/>
            <person name="Mungall C.J."/>
            <person name="Matthews B.B."/>
            <person name="Campbell K.S."/>
            <person name="Hradecky P."/>
            <person name="Huang Y."/>
            <person name="Kaminker J.S."/>
            <person name="Millburn G.H."/>
            <person name="Prochnik S.E."/>
            <person name="Smith C.D."/>
            <person name="Tupy J.L."/>
            <person name="Whitfield E.J."/>
            <person name="Bayraktaroglu L."/>
            <person name="Berman B.P."/>
            <person name="Bettencourt B.R."/>
            <person name="Celniker S.E."/>
            <person name="de Grey A.D.N.J."/>
            <person name="Drysdale R.A."/>
            <person name="Harris N.L."/>
            <person name="Richter J."/>
            <person name="Russo S."/>
            <person name="Schroeder A.J."/>
            <person name="Shu S.Q."/>
            <person name="Stapleton M."/>
            <person name="Yamada C."/>
            <person name="Ashburner M."/>
            <person name="Gelbart W.M."/>
            <person name="Rubin G.M."/>
            <person name="Lewis S.E."/>
        </authorList>
    </citation>
    <scope>GENOME REANNOTATION</scope>
    <source>
        <strain>Berkeley</strain>
    </source>
</reference>
<reference key="4">
    <citation type="journal article" date="2002" name="Genome Biol.">
        <title>A Drosophila full-length cDNA resource.</title>
        <authorList>
            <person name="Stapleton M."/>
            <person name="Carlson J.W."/>
            <person name="Brokstein P."/>
            <person name="Yu C."/>
            <person name="Champe M."/>
            <person name="George R.A."/>
            <person name="Guarin H."/>
            <person name="Kronmiller B."/>
            <person name="Pacleb J.M."/>
            <person name="Park S."/>
            <person name="Wan K.H."/>
            <person name="Rubin G.M."/>
            <person name="Celniker S.E."/>
        </authorList>
    </citation>
    <scope>NUCLEOTIDE SEQUENCE [LARGE SCALE MRNA] (ISOFORM A)</scope>
    <source>
        <strain>Berkeley</strain>
        <tissue>Embryo</tissue>
    </source>
</reference>
<reference key="5">
    <citation type="submission" date="2007-01" db="EMBL/GenBank/DDBJ databases">
        <authorList>
            <person name="Stapleton M."/>
            <person name="Carlson J.W."/>
            <person name="Frise E."/>
            <person name="Kapadia B."/>
            <person name="Park S."/>
            <person name="Wan K.H."/>
            <person name="Yu C."/>
            <person name="Celniker S.E."/>
        </authorList>
    </citation>
    <scope>NUCLEOTIDE SEQUENCE [LARGE SCALE MRNA] (ISOFORMS D AND E)</scope>
    <source>
        <strain>Berkeley</strain>
    </source>
</reference>
<reference key="6">
    <citation type="journal article" date="1997" name="Biochem. Biophys. Res. Commun.">
        <title>Purification of a regulatory subunit of type II cAMP-dependent protein kinase from Drosophila heads.</title>
        <authorList>
            <person name="Inoue H."/>
            <person name="Yoshioka T."/>
        </authorList>
    </citation>
    <scope>PROTEIN SEQUENCE OF 131-143 AND 353-365</scope>
    <scope>FUNCTION</scope>
    <scope>SUBUNIT</scope>
    <scope>SUBCELLULAR LOCATION</scope>
    <scope>TISSUE SPECIFICITY</scope>
    <source>
        <strain>Canton-S</strain>
        <tissue>Head</tissue>
    </source>
</reference>
<reference key="7">
    <citation type="journal article" date="1999" name="J. Biol. Chem.">
        <title>Generation of a novel A kinase anchor protein and a myristoylated alanine-rich C kinase substrate-like analog from a single gene.</title>
        <authorList>
            <person name="Li Z."/>
            <person name="Rossi E.A."/>
            <person name="Hoheisel J.D."/>
            <person name="Kalderon D."/>
            <person name="Rubin C.S."/>
        </authorList>
    </citation>
    <scope>INTERACTION WITH AKAP200</scope>
    <scope>SUBCELLULAR LOCATION</scope>
</reference>
<reference key="8">
    <citation type="journal article" date="2002" name="Development">
        <title>An A-kinase anchoring protein is required for protein kinase A regulatory subunit localization and morphology of actin structures during oogenesis in Drosophila.</title>
        <authorList>
            <person name="Jackson S.M."/>
            <person name="Berg C.A."/>
        </authorList>
    </citation>
    <scope>FUNCTION</scope>
    <scope>SUBCELLULAR LOCATION</scope>
    <scope>TISSUE SPECIFICITY</scope>
</reference>
<reference key="9">
    <citation type="journal article" date="2008" name="J. Proteome Res.">
        <title>Phosphoproteome analysis of Drosophila melanogaster embryos.</title>
        <authorList>
            <person name="Zhai B."/>
            <person name="Villen J."/>
            <person name="Beausoleil S.A."/>
            <person name="Mintseris J."/>
            <person name="Gygi S.P."/>
        </authorList>
    </citation>
    <scope>PHOSPHORYLATION [LARGE SCALE ANALYSIS] AT SER-51; SER-58; SER-64; SER-67; SER-84 AND TYR-90</scope>
    <scope>IDENTIFICATION BY MASS SPECTROMETRY</scope>
    <source>
        <tissue>Embryo</tissue>
    </source>
</reference>
<reference key="10">
    <citation type="journal article" date="2018" name="Cell Rep.">
        <title>Perineurial Barrier Glia Physically Respond to Alcohol in an Akap200-Dependent Manner to Promote Tolerance.</title>
        <authorList>
            <person name="Parkhurst S.J."/>
            <person name="Adhikari P."/>
            <person name="Navarrete J.S."/>
            <person name="Legendre A."/>
            <person name="Manansala M."/>
            <person name="Wolf F.W."/>
        </authorList>
    </citation>
    <scope>FUNCTION</scope>
    <scope>DISRUPTION PHENOTYPE</scope>
</reference>
<sequence length="377" mass="42748">MSSDSSRRIQVPEELKEVLLQFSISFLVEQPPDVIDYAVEYFTKLQSERPSVSHTDQSTDDQLSVNSQDADAEPPVMASSRRKSVFAEAYDPEADDDDDGATAVFPKTDEQRARLVESVKNVLLFRSLEKEQMNQVLDAMFERKVQPGDFIIRQGDDGDNFYVIESGVYKVYINDKHINTYNHTGLFGELALLYNMPRAATVQAETSGLLWAMDRQTFRRILLKSAFRKRKMYEELLNSVPMLKALQNYERMNLADALVSKSYDNGERIIKQGDAADGMYFIEEGTVSVRMDQDDAEVEISQLGKGQYFGELALVTHRPRAASVYATGGVVKLAFLDVKAFERLLGPCMDIMKRNIDDYESQLVKIFGSKNNITDTR</sequence>
<protein>
    <recommendedName>
        <fullName>cAMP-dependent protein kinase type II regulatory subunit</fullName>
    </recommendedName>
</protein>
<evidence type="ECO:0000250" key="1"/>
<evidence type="ECO:0000250" key="2">
    <source>
        <dbReference type="UniProtKB" id="Q95ZQ4"/>
    </source>
</evidence>
<evidence type="ECO:0000256" key="3">
    <source>
        <dbReference type="SAM" id="MobiDB-lite"/>
    </source>
</evidence>
<evidence type="ECO:0000269" key="4">
    <source>
    </source>
</evidence>
<evidence type="ECO:0000269" key="5">
    <source>
    </source>
</evidence>
<evidence type="ECO:0000269" key="6">
    <source>
    </source>
</evidence>
<evidence type="ECO:0000269" key="7">
    <source>
    </source>
</evidence>
<evidence type="ECO:0000269" key="8">
    <source>
    </source>
</evidence>
<evidence type="ECO:0000269" key="9">
    <source>
    </source>
</evidence>
<evidence type="ECO:0000303" key="10">
    <source ref="5"/>
</evidence>
<evidence type="ECO:0000305" key="11"/>
<evidence type="ECO:0000312" key="12">
    <source>
        <dbReference type="FlyBase" id="FBgn0022382"/>
    </source>
</evidence>
<name>KAPR2_DROME</name>
<organism>
    <name type="scientific">Drosophila melanogaster</name>
    <name type="common">Fruit fly</name>
    <dbReference type="NCBI Taxonomy" id="7227"/>
    <lineage>
        <taxon>Eukaryota</taxon>
        <taxon>Metazoa</taxon>
        <taxon>Ecdysozoa</taxon>
        <taxon>Arthropoda</taxon>
        <taxon>Hexapoda</taxon>
        <taxon>Insecta</taxon>
        <taxon>Pterygota</taxon>
        <taxon>Neoptera</taxon>
        <taxon>Endopterygota</taxon>
        <taxon>Diptera</taxon>
        <taxon>Brachycera</taxon>
        <taxon>Muscomorpha</taxon>
        <taxon>Ephydroidea</taxon>
        <taxon>Drosophilidae</taxon>
        <taxon>Drosophila</taxon>
        <taxon>Sophophora</taxon>
    </lineage>
</organism>
<gene>
    <name type="primary">Pka-R2</name>
    <name type="synonym">pka-RII</name>
    <name type="ORF">CG15862</name>
</gene>
<keyword id="KW-0025">Alternative splicing</keyword>
<keyword id="KW-0090">Biological rhythms</keyword>
<keyword id="KW-0114">cAMP</keyword>
<keyword id="KW-0116">cAMP-binding</keyword>
<keyword id="KW-1003">Cell membrane</keyword>
<keyword id="KW-0963">Cytoplasm</keyword>
<keyword id="KW-0903">Direct protein sequencing</keyword>
<keyword id="KW-0472">Membrane</keyword>
<keyword id="KW-0547">Nucleotide-binding</keyword>
<keyword id="KW-0597">Phosphoprotein</keyword>
<keyword id="KW-1185">Reference proteome</keyword>
<keyword id="KW-0677">Repeat</keyword>
<accession>P81900</accession>
<accession>A1A6P8</accession>
<accession>A1A6T9</accession>
<accession>A2RVH2</accession>
<accession>A4UZA6</accession>
<accession>A8DY87</accession>
<accession>A8DY88</accession>
<accession>Q9NB18</accession>
<accession>Q9V5E8</accession>
<proteinExistence type="evidence at protein level"/>
<feature type="chain" id="PRO_0000205397" description="cAMP-dependent protein kinase type II regulatory subunit">
    <location>
        <begin position="1"/>
        <end position="377"/>
    </location>
</feature>
<feature type="region of interest" description="Disordered" evidence="3">
    <location>
        <begin position="48"/>
        <end position="78"/>
    </location>
</feature>
<feature type="short sequence motif" description="Pseudophosphorylation motif">
    <location>
        <begin position="81"/>
        <end position="85"/>
    </location>
</feature>
<feature type="compositionally biased region" description="Polar residues" evidence="3">
    <location>
        <begin position="48"/>
        <end position="69"/>
    </location>
</feature>
<feature type="binding site">
    <location>
        <begin position="124"/>
        <end position="239"/>
    </location>
    <ligand>
        <name>3',5'-cyclic AMP</name>
        <dbReference type="ChEBI" id="CHEBI:58165"/>
        <label>1</label>
    </ligand>
</feature>
<feature type="binding site" evidence="1">
    <location>
        <position position="189"/>
    </location>
    <ligand>
        <name>3',5'-cyclic AMP</name>
        <dbReference type="ChEBI" id="CHEBI:58165"/>
        <label>1</label>
    </ligand>
</feature>
<feature type="binding site" evidence="1">
    <location>
        <position position="198"/>
    </location>
    <ligand>
        <name>3',5'-cyclic AMP</name>
        <dbReference type="ChEBI" id="CHEBI:58165"/>
        <label>1</label>
    </ligand>
</feature>
<feature type="binding site">
    <location>
        <begin position="242"/>
        <end position="362"/>
    </location>
    <ligand>
        <name>3',5'-cyclic AMP</name>
        <dbReference type="ChEBI" id="CHEBI:58165"/>
        <label>2</label>
    </ligand>
</feature>
<feature type="binding site" evidence="1">
    <location>
        <position position="311"/>
    </location>
    <ligand>
        <name>3',5'-cyclic AMP</name>
        <dbReference type="ChEBI" id="CHEBI:58165"/>
        <label>2</label>
    </ligand>
</feature>
<feature type="binding site" evidence="1">
    <location>
        <position position="320"/>
    </location>
    <ligand>
        <name>3',5'-cyclic AMP</name>
        <dbReference type="ChEBI" id="CHEBI:58165"/>
        <label>2</label>
    </ligand>
</feature>
<feature type="modified residue" description="Phosphoserine" evidence="7">
    <location>
        <position position="51"/>
    </location>
</feature>
<feature type="modified residue" description="Phosphoserine" evidence="7">
    <location>
        <position position="58"/>
    </location>
</feature>
<feature type="modified residue" description="Phosphoserine" evidence="7">
    <location>
        <position position="64"/>
    </location>
</feature>
<feature type="modified residue" description="Phosphoserine" evidence="7">
    <location>
        <position position="67"/>
    </location>
</feature>
<feature type="modified residue" description="Phosphoserine" evidence="7">
    <location>
        <position position="84"/>
    </location>
</feature>
<feature type="modified residue" description="Phosphotyrosine" evidence="7">
    <location>
        <position position="90"/>
    </location>
</feature>
<feature type="splice variant" id="VSP_058165" description="In isoform D." evidence="11">
    <original>VKAFERLLGPCMDIMKRNIDDYESQLVKIFGSKNNITDTR</original>
    <variation>TEAFERIMGFLTDVLKRNIVIYEQMFTDMARRNTNL</variation>
    <location>
        <begin position="338"/>
        <end position="377"/>
    </location>
</feature>
<feature type="splice variant" id="VSP_026945" description="In isoform E." evidence="10">
    <original>KA</original>
    <variation>IC</variation>
    <location>
        <begin position="339"/>
        <end position="340"/>
    </location>
</feature>
<feature type="splice variant" id="VSP_026946" description="In isoform E." evidence="10">
    <original>LGPCMDIMKRNIDDYESQLVKIFGSKNNITDTR</original>
    <variation>MGKCSGGIQRSISGYRYLEQDLREYFGNLPLN</variation>
    <location>
        <begin position="345"/>
        <end position="377"/>
    </location>
</feature>
<comment type="function">
    <text evidence="5 6 9">Regulatory subunit of the cAMP-dependent protein kinases involved in cAMP signaling in cells (PubMed:10781603, PubMed:9196067). Mediates membrane association by binding to anchoring proteins, such as Akap200 (PubMed:12223401, PubMed:9196067). Might play an essential role in the regulation of neuronal activity in the brain (PubMed:10781603, PubMed:9196067).</text>
</comment>
<comment type="subunit">
    <text evidence="2 4 9">Tetramer, composed of 2 regulatory (R) and 2 catalytic (C) subunits (PubMed:9196067). In the presence of cAMP it dissociates into 2 active monomeric C subunits and an R dimer (By similarity). Interacts with Akap200 (PubMed:10480936).</text>
</comment>
<comment type="interaction">
    <interactant intactId="EBI-129349">
        <id>P81900</id>
    </interactant>
    <interactant intactId="EBI-3409728">
        <id>Q9VW17</id>
        <label>BcDNA:RH51268</label>
    </interactant>
    <organismsDiffer>false</organismsDiffer>
    <experiments>4</experiments>
</comment>
<comment type="subcellular location">
    <subcellularLocation>
        <location evidence="4 9">Cytoplasm</location>
    </subcellularLocation>
    <subcellularLocation>
        <location evidence="6">Cell membrane</location>
    </subcellularLocation>
    <text evidence="6">Localization to the membrane depends on Akap200.</text>
</comment>
<comment type="alternative products">
    <event type="alternative splicing"/>
    <isoform>
        <id>P81900-1</id>
        <name evidence="12">A</name>
        <name evidence="12">B</name>
        <sequence type="displayed"/>
    </isoform>
    <isoform>
        <id>P81900-2</id>
        <name evidence="12">E</name>
        <sequence type="described" ref="VSP_026945 VSP_026946"/>
    </isoform>
    <isoform>
        <id>P81900-5</id>
        <name evidence="12">D</name>
        <sequence type="described" ref="VSP_058165"/>
    </isoform>
</comment>
<comment type="tissue specificity">
    <text evidence="6">Detected in follicle cells, germline-derived cells, germline line stem cells and outer rim of ring canals of nurse cells throughout oogenesis (at protein level).</text>
</comment>
<comment type="PTM">
    <text evidence="1">The pseudophosphorylation site binds to the substrate-binding region of the catalytic chain but is not phosphorylated. The physiological significance of phosphorylations by other kinases is unclear (By similarity).</text>
</comment>
<comment type="disruption phenotype">
    <text evidence="8">RNAi-mediated knockdown increases ethanol sedation sensitivity when first exposed to ethanol and decreases ethanol tolerance following repeated ethanol exposure.</text>
</comment>
<comment type="similarity">
    <text evidence="11">Belongs to the cAMP-dependent kinase regulatory chain family.</text>
</comment>
<comment type="sequence caution" evidence="11">
    <conflict type="miscellaneous discrepancy">
        <sequence resource="EMBL-CDS" id="ABL75628"/>
    </conflict>
</comment>
<dbReference type="EMBL" id="AF274008">
    <property type="protein sequence ID" value="AAF86976.1"/>
    <property type="molecule type" value="mRNA"/>
</dbReference>
<dbReference type="EMBL" id="AE013599">
    <property type="protein sequence ID" value="AAF58862.2"/>
    <property type="molecule type" value="Genomic_DNA"/>
</dbReference>
<dbReference type="EMBL" id="AE013599">
    <property type="protein sequence ID" value="AAM71046.3"/>
    <property type="molecule type" value="Genomic_DNA"/>
</dbReference>
<dbReference type="EMBL" id="AE013599">
    <property type="protein sequence ID" value="ABV53747.1"/>
    <property type="molecule type" value="Genomic_DNA"/>
</dbReference>
<dbReference type="EMBL" id="AE013599">
    <property type="protein sequence ID" value="ABV53748.1"/>
    <property type="molecule type" value="Genomic_DNA"/>
</dbReference>
<dbReference type="EMBL" id="AY069669">
    <property type="protein sequence ID" value="AAL39814.1"/>
    <property type="molecule type" value="mRNA"/>
</dbReference>
<dbReference type="EMBL" id="BT029569">
    <property type="protein sequence ID" value="ABL75628.1"/>
    <property type="status" value="ALT_SEQ"/>
    <property type="molecule type" value="mRNA"/>
</dbReference>
<dbReference type="EMBL" id="BT029610">
    <property type="protein sequence ID" value="ABL75669.1"/>
    <property type="molecule type" value="mRNA"/>
</dbReference>
<dbReference type="EMBL" id="BT029637">
    <property type="protein sequence ID" value="ABL75696.1"/>
    <property type="molecule type" value="mRNA"/>
</dbReference>
<dbReference type="EMBL" id="BT029963">
    <property type="protein sequence ID" value="ABM92837.1"/>
    <property type="molecule type" value="mRNA"/>
</dbReference>
<dbReference type="RefSeq" id="NP_001097251.1">
    <molecule id="P81900-5"/>
    <property type="nucleotide sequence ID" value="NM_001103781.3"/>
</dbReference>
<dbReference type="RefSeq" id="NP_001097252.1">
    <molecule id="P81900-2"/>
    <property type="nucleotide sequence ID" value="NM_001103782.2"/>
</dbReference>
<dbReference type="RefSeq" id="NP_523671.1">
    <molecule id="P81900-1"/>
    <property type="nucleotide sequence ID" value="NM_078947.4"/>
</dbReference>
<dbReference type="RefSeq" id="NP_724860.2">
    <molecule id="P81900-1"/>
    <property type="nucleotide sequence ID" value="NM_165723.4"/>
</dbReference>
<dbReference type="SMR" id="P81900"/>
<dbReference type="BioGRID" id="61869">
    <property type="interactions" value="10"/>
</dbReference>
<dbReference type="FunCoup" id="P81900">
    <property type="interactions" value="1376"/>
</dbReference>
<dbReference type="IntAct" id="P81900">
    <property type="interactions" value="27"/>
</dbReference>
<dbReference type="STRING" id="7227.FBpp0087524"/>
<dbReference type="iPTMnet" id="P81900"/>
<dbReference type="PaxDb" id="7227-FBpp0087524"/>
<dbReference type="DNASU" id="36041"/>
<dbReference type="EnsemblMetazoa" id="FBtr0088437">
    <molecule id="P81900-1"/>
    <property type="protein sequence ID" value="FBpp0087523"/>
    <property type="gene ID" value="FBgn0022382"/>
</dbReference>
<dbReference type="EnsemblMetazoa" id="FBtr0088438">
    <molecule id="P81900-1"/>
    <property type="protein sequence ID" value="FBpp0087524"/>
    <property type="gene ID" value="FBgn0022382"/>
</dbReference>
<dbReference type="EnsemblMetazoa" id="FBtr0112901">
    <molecule id="P81900-5"/>
    <property type="protein sequence ID" value="FBpp0111814"/>
    <property type="gene ID" value="FBgn0022382"/>
</dbReference>
<dbReference type="EnsemblMetazoa" id="FBtr0112902">
    <molecule id="P81900-2"/>
    <property type="protein sequence ID" value="FBpp0111815"/>
    <property type="gene ID" value="FBgn0022382"/>
</dbReference>
<dbReference type="GeneID" id="36041"/>
<dbReference type="KEGG" id="dme:Dmel_CG15862"/>
<dbReference type="UCSC" id="CG15862-RD">
    <property type="organism name" value="d. melanogaster"/>
</dbReference>
<dbReference type="UCSC" id="CG15862-RE">
    <property type="organism name" value="d. melanogaster"/>
</dbReference>
<dbReference type="AGR" id="FB:FBgn0022382"/>
<dbReference type="CTD" id="36041"/>
<dbReference type="FlyBase" id="FBgn0022382">
    <property type="gene designation" value="Pka-R2"/>
</dbReference>
<dbReference type="VEuPathDB" id="VectorBase:FBgn0022382"/>
<dbReference type="eggNOG" id="KOG1113">
    <property type="taxonomic scope" value="Eukaryota"/>
</dbReference>
<dbReference type="GeneTree" id="ENSGT00940000154836"/>
<dbReference type="HOGENOM" id="CLU_018310_1_1_1"/>
<dbReference type="InParanoid" id="P81900"/>
<dbReference type="OMA" id="WSPPHHP"/>
<dbReference type="OrthoDB" id="417078at2759"/>
<dbReference type="PhylomeDB" id="P81900"/>
<dbReference type="Reactome" id="R-DME-163615">
    <property type="pathway name" value="PKA activation"/>
</dbReference>
<dbReference type="Reactome" id="R-DME-164378">
    <property type="pathway name" value="PKA activation in glucagon signalling"/>
</dbReference>
<dbReference type="Reactome" id="R-DME-180024">
    <property type="pathway name" value="DARPP-32 events"/>
</dbReference>
<dbReference type="Reactome" id="R-DME-432040">
    <property type="pathway name" value="Vasopressin regulates renal water homeostasis via Aquaporins"/>
</dbReference>
<dbReference type="Reactome" id="R-DME-442720">
    <property type="pathway name" value="CREB1 phosphorylation through the activation of Adenylate Cyclase"/>
</dbReference>
<dbReference type="Reactome" id="R-DME-5610787">
    <property type="pathway name" value="Hedgehog 'off' state"/>
</dbReference>
<dbReference type="Reactome" id="R-DME-9634597">
    <property type="pathway name" value="GPER1 signaling"/>
</dbReference>
<dbReference type="Reactome" id="R-DME-983231">
    <property type="pathway name" value="Factors involved in megakaryocyte development and platelet production"/>
</dbReference>
<dbReference type="Reactome" id="R-DME-9856530">
    <property type="pathway name" value="High laminar flow shear stress activates signaling by PIEZO1 and PECAM1:CDH5:KDR in endothelial cells"/>
</dbReference>
<dbReference type="SignaLink" id="P81900"/>
<dbReference type="BioGRID-ORCS" id="36041">
    <property type="hits" value="0 hits in 3 CRISPR screens"/>
</dbReference>
<dbReference type="GenomeRNAi" id="36041"/>
<dbReference type="PRO" id="PR:P81900"/>
<dbReference type="Proteomes" id="UP000000803">
    <property type="component" value="Chromosome 2R"/>
</dbReference>
<dbReference type="Bgee" id="FBgn0022382">
    <property type="expression patterns" value="Expressed in adult gamma Kenyon cell in brain and 288 other cell types or tissues"/>
</dbReference>
<dbReference type="GO" id="GO:0005952">
    <property type="term" value="C:cAMP-dependent protein kinase complex"/>
    <property type="evidence" value="ECO:0000318"/>
    <property type="project" value="GO_Central"/>
</dbReference>
<dbReference type="GO" id="GO:0005737">
    <property type="term" value="C:cytoplasm"/>
    <property type="evidence" value="ECO:0000314"/>
    <property type="project" value="UniProtKB"/>
</dbReference>
<dbReference type="GO" id="GO:0005829">
    <property type="term" value="C:cytosol"/>
    <property type="evidence" value="ECO:0000318"/>
    <property type="project" value="GO_Central"/>
</dbReference>
<dbReference type="GO" id="GO:0005886">
    <property type="term" value="C:plasma membrane"/>
    <property type="evidence" value="ECO:0007005"/>
    <property type="project" value="FlyBase"/>
</dbReference>
<dbReference type="GO" id="GO:0030552">
    <property type="term" value="F:cAMP binding"/>
    <property type="evidence" value="ECO:0000318"/>
    <property type="project" value="GO_Central"/>
</dbReference>
<dbReference type="GO" id="GO:0004862">
    <property type="term" value="F:cAMP-dependent protein kinase inhibitor activity"/>
    <property type="evidence" value="ECO:0000318"/>
    <property type="project" value="GO_Central"/>
</dbReference>
<dbReference type="GO" id="GO:0034236">
    <property type="term" value="F:protein kinase A catalytic subunit binding"/>
    <property type="evidence" value="ECO:0000318"/>
    <property type="project" value="GO_Central"/>
</dbReference>
<dbReference type="GO" id="GO:0007189">
    <property type="term" value="P:adenylate cyclase-activating G protein-coupled receptor signaling pathway"/>
    <property type="evidence" value="ECO:0000318"/>
    <property type="project" value="GO_Central"/>
</dbReference>
<dbReference type="GO" id="GO:0007411">
    <property type="term" value="P:axon guidance"/>
    <property type="evidence" value="ECO:0000315"/>
    <property type="project" value="FlyBase"/>
</dbReference>
<dbReference type="GO" id="GO:0048148">
    <property type="term" value="P:behavioral response to cocaine"/>
    <property type="evidence" value="ECO:0000315"/>
    <property type="project" value="UniProtKB"/>
</dbReference>
<dbReference type="GO" id="GO:0048149">
    <property type="term" value="P:behavioral response to ethanol"/>
    <property type="evidence" value="ECO:0000315"/>
    <property type="project" value="UniProtKB"/>
</dbReference>
<dbReference type="GO" id="GO:0071361">
    <property type="term" value="P:cellular response to ethanol"/>
    <property type="evidence" value="ECO:0000315"/>
    <property type="project" value="UniProtKB"/>
</dbReference>
<dbReference type="GO" id="GO:0007623">
    <property type="term" value="P:circadian rhythm"/>
    <property type="evidence" value="ECO:0000303"/>
    <property type="project" value="FlyBase"/>
</dbReference>
<dbReference type="GO" id="GO:0045475">
    <property type="term" value="P:locomotor rhythm"/>
    <property type="evidence" value="ECO:0000315"/>
    <property type="project" value="UniProtKB"/>
</dbReference>
<dbReference type="GO" id="GO:0042048">
    <property type="term" value="P:olfactory behavior"/>
    <property type="evidence" value="ECO:0000315"/>
    <property type="project" value="FlyBase"/>
</dbReference>
<dbReference type="GO" id="GO:0008355">
    <property type="term" value="P:olfactory learning"/>
    <property type="evidence" value="ECO:0000315"/>
    <property type="project" value="FlyBase"/>
</dbReference>
<dbReference type="GO" id="GO:0007622">
    <property type="term" value="P:rhythmic behavior"/>
    <property type="evidence" value="ECO:0000304"/>
    <property type="project" value="FlyBase"/>
</dbReference>
<dbReference type="CDD" id="cd00038">
    <property type="entry name" value="CAP_ED"/>
    <property type="match status" value="2"/>
</dbReference>
<dbReference type="CDD" id="cd12099">
    <property type="entry name" value="DD_RII_PKA"/>
    <property type="match status" value="1"/>
</dbReference>
<dbReference type="FunFam" id="1.20.890.10:FF:000015">
    <property type="entry name" value="cAMP-dependent protein kinase type II regulatory subunit"/>
    <property type="match status" value="1"/>
</dbReference>
<dbReference type="FunFam" id="2.60.120.10:FF:000017">
    <property type="entry name" value="cAMP-dependent protein kinase type II regulatory subunit"/>
    <property type="match status" value="1"/>
</dbReference>
<dbReference type="FunFam" id="2.60.120.10:FF:000108">
    <property type="entry name" value="cAMP-dependent protein kinase type II regulatory subunit"/>
    <property type="match status" value="1"/>
</dbReference>
<dbReference type="Gene3D" id="1.20.890.10">
    <property type="entry name" value="cAMP-dependent protein kinase regulatory subunit, dimerization-anchoring domain"/>
    <property type="match status" value="1"/>
</dbReference>
<dbReference type="Gene3D" id="2.60.120.10">
    <property type="entry name" value="Jelly Rolls"/>
    <property type="match status" value="2"/>
</dbReference>
<dbReference type="InterPro" id="IPR050503">
    <property type="entry name" value="cAMP-dep_PK_reg_su-like"/>
</dbReference>
<dbReference type="InterPro" id="IPR012198">
    <property type="entry name" value="cAMP_dep_PK_reg_su"/>
</dbReference>
<dbReference type="InterPro" id="IPR018488">
    <property type="entry name" value="cNMP-bd_CS"/>
</dbReference>
<dbReference type="InterPro" id="IPR000595">
    <property type="entry name" value="cNMP-bd_dom"/>
</dbReference>
<dbReference type="InterPro" id="IPR018490">
    <property type="entry name" value="cNMP-bd_dom_sf"/>
</dbReference>
<dbReference type="InterPro" id="IPR014710">
    <property type="entry name" value="RmlC-like_jellyroll"/>
</dbReference>
<dbReference type="PANTHER" id="PTHR11635">
    <property type="entry name" value="CAMP-DEPENDENT PROTEIN KINASE REGULATORY CHAIN"/>
    <property type="match status" value="1"/>
</dbReference>
<dbReference type="PANTHER" id="PTHR11635:SF152">
    <property type="entry name" value="CAMP-DEPENDENT PROTEIN KINASE TYPE I REGULATORY SUBUNIT-RELATED"/>
    <property type="match status" value="1"/>
</dbReference>
<dbReference type="Pfam" id="PF00027">
    <property type="entry name" value="cNMP_binding"/>
    <property type="match status" value="2"/>
</dbReference>
<dbReference type="PIRSF" id="PIRSF000548">
    <property type="entry name" value="PK_regulatory"/>
    <property type="match status" value="1"/>
</dbReference>
<dbReference type="PRINTS" id="PR00103">
    <property type="entry name" value="CAMPKINASE"/>
</dbReference>
<dbReference type="SMART" id="SM00100">
    <property type="entry name" value="cNMP"/>
    <property type="match status" value="2"/>
</dbReference>
<dbReference type="SUPFAM" id="SSF51206">
    <property type="entry name" value="cAMP-binding domain-like"/>
    <property type="match status" value="2"/>
</dbReference>
<dbReference type="SUPFAM" id="SSF47391">
    <property type="entry name" value="Dimerization-anchoring domain of cAMP-dependent PK regulatory subunit"/>
    <property type="match status" value="1"/>
</dbReference>
<dbReference type="PROSITE" id="PS00888">
    <property type="entry name" value="CNMP_BINDING_1"/>
    <property type="match status" value="2"/>
</dbReference>
<dbReference type="PROSITE" id="PS00889">
    <property type="entry name" value="CNMP_BINDING_2"/>
    <property type="match status" value="2"/>
</dbReference>
<dbReference type="PROSITE" id="PS50042">
    <property type="entry name" value="CNMP_BINDING_3"/>
    <property type="match status" value="2"/>
</dbReference>